<reference key="1">
    <citation type="submission" date="2008-02" db="EMBL/GenBank/DDBJ databases">
        <title>Complete sequence of Synechococcus sp. PCC 7002.</title>
        <authorList>
            <person name="Li T."/>
            <person name="Zhao J."/>
            <person name="Zhao C."/>
            <person name="Liu Z."/>
            <person name="Zhao F."/>
            <person name="Marquardt J."/>
            <person name="Nomura C.T."/>
            <person name="Persson S."/>
            <person name="Detter J.C."/>
            <person name="Richardson P.M."/>
            <person name="Lanz C."/>
            <person name="Schuster S.C."/>
            <person name="Wang J."/>
            <person name="Li S."/>
            <person name="Huang X."/>
            <person name="Cai T."/>
            <person name="Yu Z."/>
            <person name="Luo J."/>
            <person name="Zhao J."/>
            <person name="Bryant D.A."/>
        </authorList>
    </citation>
    <scope>NUCLEOTIDE SEQUENCE [LARGE SCALE GENOMIC DNA]</scope>
    <source>
        <strain>ATCC 27264 / PCC 7002 / PR-6</strain>
    </source>
</reference>
<accession>B1XQL0</accession>
<comment type="function">
    <text evidence="1">Cell division protein that is part of the divisome complex and is recruited early to the Z-ring. Probably stimulates Z-ring formation, perhaps through the cross-linking of FtsZ protofilaments. Its function overlaps with FtsA.</text>
</comment>
<comment type="subunit">
    <text evidence="1">Homodimer. Interacts with FtsZ.</text>
</comment>
<comment type="subcellular location">
    <subcellularLocation>
        <location evidence="1">Cytoplasm</location>
    </subcellularLocation>
    <text evidence="1">Localizes to the division site, in a FtsZ-dependent manner.</text>
</comment>
<comment type="similarity">
    <text evidence="1">Belongs to the SepF family.</text>
</comment>
<keyword id="KW-0131">Cell cycle</keyword>
<keyword id="KW-0132">Cell division</keyword>
<keyword id="KW-0963">Cytoplasm</keyword>
<keyword id="KW-1185">Reference proteome</keyword>
<keyword id="KW-0717">Septation</keyword>
<dbReference type="EMBL" id="CP000951">
    <property type="protein sequence ID" value="ACA99905.1"/>
    <property type="molecule type" value="Genomic_DNA"/>
</dbReference>
<dbReference type="RefSeq" id="WP_012307528.1">
    <property type="nucleotide sequence ID" value="NZ_JAHHPU010000002.1"/>
</dbReference>
<dbReference type="SMR" id="B1XQL0"/>
<dbReference type="STRING" id="32049.SYNPCC7002_A1918"/>
<dbReference type="KEGG" id="syp:SYNPCC7002_A1918"/>
<dbReference type="eggNOG" id="COG1799">
    <property type="taxonomic scope" value="Bacteria"/>
</dbReference>
<dbReference type="HOGENOM" id="CLU_078499_1_1_3"/>
<dbReference type="Proteomes" id="UP000001688">
    <property type="component" value="Chromosome"/>
</dbReference>
<dbReference type="GO" id="GO:0005737">
    <property type="term" value="C:cytoplasm"/>
    <property type="evidence" value="ECO:0007669"/>
    <property type="project" value="UniProtKB-SubCell"/>
</dbReference>
<dbReference type="GO" id="GO:0000917">
    <property type="term" value="P:division septum assembly"/>
    <property type="evidence" value="ECO:0007669"/>
    <property type="project" value="UniProtKB-KW"/>
</dbReference>
<dbReference type="GO" id="GO:0043093">
    <property type="term" value="P:FtsZ-dependent cytokinesis"/>
    <property type="evidence" value="ECO:0007669"/>
    <property type="project" value="UniProtKB-UniRule"/>
</dbReference>
<dbReference type="Gene3D" id="3.30.110.150">
    <property type="entry name" value="SepF-like protein"/>
    <property type="match status" value="1"/>
</dbReference>
<dbReference type="HAMAP" id="MF_01197">
    <property type="entry name" value="SepF"/>
    <property type="match status" value="1"/>
</dbReference>
<dbReference type="InterPro" id="IPR023052">
    <property type="entry name" value="Cell_div_SepF"/>
</dbReference>
<dbReference type="InterPro" id="IPR007561">
    <property type="entry name" value="Cell_div_SepF/SepF-rel"/>
</dbReference>
<dbReference type="InterPro" id="IPR038594">
    <property type="entry name" value="SepF-like_sf"/>
</dbReference>
<dbReference type="PANTHER" id="PTHR35798">
    <property type="entry name" value="CELL DIVISION PROTEIN SEPF"/>
    <property type="match status" value="1"/>
</dbReference>
<dbReference type="PANTHER" id="PTHR35798:SF1">
    <property type="entry name" value="CELL DIVISION PROTEIN SEPF"/>
    <property type="match status" value="1"/>
</dbReference>
<dbReference type="Pfam" id="PF04472">
    <property type="entry name" value="SepF"/>
    <property type="match status" value="1"/>
</dbReference>
<evidence type="ECO:0000255" key="1">
    <source>
        <dbReference type="HAMAP-Rule" id="MF_01197"/>
    </source>
</evidence>
<evidence type="ECO:0000256" key="2">
    <source>
        <dbReference type="SAM" id="MobiDB-lite"/>
    </source>
</evidence>
<sequence length="197" mass="21722">MFNSIRNFLGFNEPEEYEEYYEGEIDNNDYHALYPAEMPTPLPEESAPAPRRLPENPTVASNFAMNSNTTPTRNNVIGLPGVSNSPAEVVVCEPHSFEEMPQIIQALRDRRSIVLNLNMMDPDEAQRAVDFVAGGTFAIDGHQERIGDSIFLFTPNCVQVTNSLSREETPATPAAPARPAAPAPAWSDEMTPMAQAQ</sequence>
<protein>
    <recommendedName>
        <fullName evidence="1">Cell division protein SepF</fullName>
    </recommendedName>
</protein>
<organism>
    <name type="scientific">Picosynechococcus sp. (strain ATCC 27264 / PCC 7002 / PR-6)</name>
    <name type="common">Agmenellum quadruplicatum</name>
    <dbReference type="NCBI Taxonomy" id="32049"/>
    <lineage>
        <taxon>Bacteria</taxon>
        <taxon>Bacillati</taxon>
        <taxon>Cyanobacteriota</taxon>
        <taxon>Cyanophyceae</taxon>
        <taxon>Oscillatoriophycideae</taxon>
        <taxon>Chroococcales</taxon>
        <taxon>Geminocystaceae</taxon>
        <taxon>Picosynechococcus</taxon>
    </lineage>
</organism>
<proteinExistence type="inferred from homology"/>
<name>SEPF_PICP2</name>
<feature type="chain" id="PRO_1000138479" description="Cell division protein SepF">
    <location>
        <begin position="1"/>
        <end position="197"/>
    </location>
</feature>
<feature type="region of interest" description="Disordered" evidence="2">
    <location>
        <begin position="38"/>
        <end position="72"/>
    </location>
</feature>
<feature type="region of interest" description="Disordered" evidence="2">
    <location>
        <begin position="164"/>
        <end position="197"/>
    </location>
</feature>
<feature type="compositionally biased region" description="Polar residues" evidence="2">
    <location>
        <begin position="58"/>
        <end position="72"/>
    </location>
</feature>
<feature type="compositionally biased region" description="Low complexity" evidence="2">
    <location>
        <begin position="170"/>
        <end position="185"/>
    </location>
</feature>
<gene>
    <name evidence="1" type="primary">sepF</name>
    <name type="ordered locus">SYNPCC7002_A1918</name>
</gene>